<feature type="chain" id="PRO_0000188302" description="Erbin">
    <location>
        <begin position="1"/>
        <end position="1402"/>
    </location>
</feature>
<feature type="repeat" description="LRR 1">
    <location>
        <begin position="23"/>
        <end position="44"/>
    </location>
</feature>
<feature type="repeat" description="LRR 2">
    <location>
        <begin position="47"/>
        <end position="68"/>
    </location>
</feature>
<feature type="repeat" description="LRR 3">
    <location>
        <begin position="70"/>
        <end position="91"/>
    </location>
</feature>
<feature type="repeat" description="LRR 4">
    <location>
        <begin position="93"/>
        <end position="114"/>
    </location>
</feature>
<feature type="repeat" description="LRR 5">
    <location>
        <begin position="116"/>
        <end position="137"/>
    </location>
</feature>
<feature type="repeat" description="LRR 6">
    <location>
        <begin position="139"/>
        <end position="161"/>
    </location>
</feature>
<feature type="repeat" description="LRR 7">
    <location>
        <begin position="162"/>
        <end position="183"/>
    </location>
</feature>
<feature type="repeat" description="LRR 8">
    <location>
        <begin position="185"/>
        <end position="206"/>
    </location>
</feature>
<feature type="repeat" description="LRR 9">
    <location>
        <begin position="208"/>
        <end position="229"/>
    </location>
</feature>
<feature type="repeat" description="LRR 10">
    <location>
        <begin position="231"/>
        <end position="252"/>
    </location>
</feature>
<feature type="repeat" description="LRR 11">
    <location>
        <begin position="254"/>
        <end position="275"/>
    </location>
</feature>
<feature type="repeat" description="LRR 12">
    <location>
        <begin position="277"/>
        <end position="298"/>
    </location>
</feature>
<feature type="repeat" description="LRR 13">
    <location>
        <begin position="300"/>
        <end position="321"/>
    </location>
</feature>
<feature type="repeat" description="LRR 14">
    <location>
        <begin position="323"/>
        <end position="344"/>
    </location>
</feature>
<feature type="repeat" description="LRR 15">
    <location>
        <begin position="346"/>
        <end position="367"/>
    </location>
</feature>
<feature type="repeat" description="LRR 16">
    <location>
        <begin position="369"/>
        <end position="391"/>
    </location>
</feature>
<feature type="repeat" description="LRR 17">
    <location>
        <begin position="392"/>
        <end position="413"/>
    </location>
</feature>
<feature type="domain" description="PDZ" evidence="2">
    <location>
        <begin position="1311"/>
        <end position="1400"/>
    </location>
</feature>
<feature type="region of interest" description="Disordered" evidence="3">
    <location>
        <begin position="465"/>
        <end position="489"/>
    </location>
</feature>
<feature type="region of interest" description="Disordered" evidence="3">
    <location>
        <begin position="507"/>
        <end position="543"/>
    </location>
</feature>
<feature type="region of interest" description="Disordered" evidence="3">
    <location>
        <begin position="629"/>
        <end position="694"/>
    </location>
</feature>
<feature type="region of interest" description="Disordered" evidence="3">
    <location>
        <begin position="824"/>
        <end position="864"/>
    </location>
</feature>
<feature type="region of interest" description="Disordered" evidence="3">
    <location>
        <begin position="990"/>
        <end position="1018"/>
    </location>
</feature>
<feature type="region of interest" description="Disordered" evidence="3">
    <location>
        <begin position="1070"/>
        <end position="1093"/>
    </location>
</feature>
<feature type="region of interest" description="Disordered" evidence="3">
    <location>
        <begin position="1107"/>
        <end position="1187"/>
    </location>
</feature>
<feature type="region of interest" description="Disordered" evidence="3">
    <location>
        <begin position="1198"/>
        <end position="1217"/>
    </location>
</feature>
<feature type="region of interest" description="Disordered" evidence="3">
    <location>
        <begin position="1222"/>
        <end position="1274"/>
    </location>
</feature>
<feature type="compositionally biased region" description="Basic and acidic residues" evidence="3">
    <location>
        <begin position="470"/>
        <end position="480"/>
    </location>
</feature>
<feature type="compositionally biased region" description="Basic and acidic residues" evidence="3">
    <location>
        <begin position="507"/>
        <end position="534"/>
    </location>
</feature>
<feature type="compositionally biased region" description="Basic and acidic residues" evidence="3">
    <location>
        <begin position="629"/>
        <end position="638"/>
    </location>
</feature>
<feature type="compositionally biased region" description="Low complexity" evidence="3">
    <location>
        <begin position="647"/>
        <end position="659"/>
    </location>
</feature>
<feature type="compositionally biased region" description="Polar residues" evidence="3">
    <location>
        <begin position="660"/>
        <end position="689"/>
    </location>
</feature>
<feature type="compositionally biased region" description="Polar residues" evidence="3">
    <location>
        <begin position="1070"/>
        <end position="1084"/>
    </location>
</feature>
<feature type="compositionally biased region" description="Polar residues" evidence="3">
    <location>
        <begin position="1128"/>
        <end position="1139"/>
    </location>
</feature>
<feature type="compositionally biased region" description="Polar residues" evidence="3">
    <location>
        <begin position="1149"/>
        <end position="1164"/>
    </location>
</feature>
<feature type="modified residue" description="Phosphoserine" evidence="16">
    <location>
        <position position="440"/>
    </location>
</feature>
<feature type="modified residue" description="Phosphoserine" evidence="16">
    <location>
        <position position="444"/>
    </location>
</feature>
<feature type="modified residue" description="Phosphotyrosine" evidence="16">
    <location>
        <position position="483"/>
    </location>
</feature>
<feature type="modified residue" description="Phosphothreonine" evidence="1">
    <location>
        <position position="485"/>
    </location>
</feature>
<feature type="modified residue" description="Phosphoserine" evidence="16">
    <location>
        <position position="595"/>
    </location>
</feature>
<feature type="modified residue" description="Phosphoserine" evidence="13 15 16">
    <location>
        <position position="599"/>
    </location>
</feature>
<feature type="modified residue" description="Phosphoserine" evidence="13 15 16">
    <location>
        <position position="600"/>
    </location>
</feature>
<feature type="modified residue" description="Phosphoserine" evidence="1">
    <location>
        <position position="617"/>
    </location>
</feature>
<feature type="modified residue" description="Phosphoserine" evidence="15 16">
    <location>
        <position position="712"/>
    </location>
</feature>
<feature type="modified residue" description="Phosphoserine" evidence="16">
    <location>
        <position position="849"/>
    </location>
</feature>
<feature type="modified residue" description="Phosphoserine" evidence="15">
    <location>
        <position position="854"/>
    </location>
</feature>
<feature type="modified residue" description="Phosphoserine" evidence="16">
    <location>
        <position position="869"/>
    </location>
</feature>
<feature type="modified residue" description="Phosphothreonine" evidence="1">
    <location>
        <position position="914"/>
    </location>
</feature>
<feature type="modified residue" description="Phosphotyrosine" evidence="1">
    <location>
        <position position="917"/>
    </location>
</feature>
<feature type="modified residue" description="Phosphoserine" evidence="1">
    <location>
        <position position="928"/>
    </location>
</feature>
<feature type="modified residue" description="Phosphotyrosine" evidence="1">
    <location>
        <position position="970"/>
    </location>
</feature>
<feature type="modified residue" description="Phosphotyrosine" evidence="14">
    <location>
        <position position="1097"/>
    </location>
</feature>
<feature type="modified residue" description="Phosphoserine" evidence="16">
    <location>
        <position position="1150"/>
    </location>
</feature>
<feature type="modified residue" description="Phosphoserine" evidence="1">
    <location>
        <position position="1171"/>
    </location>
</feature>
<feature type="modified residue" description="Phosphoserine" evidence="1">
    <location>
        <position position="1276"/>
    </location>
</feature>
<feature type="splice variant" id="VSP_010808" description="In isoform 2." evidence="8 9">
    <original>K</original>
    <variation>KSMLSRSFNSNLTAVSSSHYGSSRDLHGSQGSLALSVADGRGSGGHIFR</variation>
    <location>
        <position position="1203"/>
    </location>
</feature>
<feature type="splice variant" id="VSP_010809" description="In isoform 1." evidence="7 8">
    <location>
        <begin position="1243"/>
        <end position="1268"/>
    </location>
</feature>
<feature type="mutagenesis site" description="Decreases interaction with NOD2." evidence="4">
    <original>P</original>
    <variation>L</variation>
    <location>
        <position position="315"/>
    </location>
</feature>
<feature type="sequence conflict" description="In Ref. 1; BAC65755." evidence="10" ref="1">
    <original>L</original>
    <variation>P</variation>
    <location>
        <position position="255"/>
    </location>
</feature>
<feature type="sequence conflict" description="In Ref. 4; AAH28256." evidence="10" ref="4">
    <original>DKK</original>
    <variation>HAS</variation>
    <location>
        <begin position="721"/>
        <end position="723"/>
    </location>
</feature>
<feature type="sequence conflict" description="In Ref. 5; AAF77047." evidence="10" ref="5">
    <original>VRS</original>
    <variation>ASG</variation>
    <location>
        <begin position="908"/>
        <end position="910"/>
    </location>
</feature>
<feature type="modified residue" description="Phosphoserine" evidence="16">
    <location sequence="Q80TH2-2">
        <position position="1231"/>
    </location>
</feature>
<feature type="modified residue" description="Phosphoserine" evidence="16">
    <location sequence="Q80TH2-2">
        <position position="1234"/>
    </location>
</feature>
<gene>
    <name evidence="6" type="primary">Erbin</name>
    <name evidence="12" type="synonym">Erbb2ip</name>
    <name evidence="11" type="synonym">Kiaa1225</name>
    <name type="synonym">Lap2</name>
</gene>
<proteinExistence type="evidence at protein level"/>
<reference key="1">
    <citation type="journal article" date="2003" name="DNA Res.">
        <title>Prediction of the coding sequences of mouse homologues of KIAA gene: II. The complete nucleotide sequences of 400 mouse KIAA-homologous cDNAs identified by screening of terminal sequences of cDNA clones randomly sampled from size-fractionated libraries.</title>
        <authorList>
            <person name="Okazaki N."/>
            <person name="Kikuno R."/>
            <person name="Ohara R."/>
            <person name="Inamoto S."/>
            <person name="Aizawa H."/>
            <person name="Yuasa S."/>
            <person name="Nakajima D."/>
            <person name="Nagase T."/>
            <person name="Ohara O."/>
            <person name="Koga H."/>
        </authorList>
    </citation>
    <scope>NUCLEOTIDE SEQUENCE [LARGE SCALE MRNA] (ISOFORM 1)</scope>
    <source>
        <tissue>Brain</tissue>
    </source>
</reference>
<reference key="2">
    <citation type="journal article" date="2009" name="PLoS Biol.">
        <title>Lineage-specific biology revealed by a finished genome assembly of the mouse.</title>
        <authorList>
            <person name="Church D.M."/>
            <person name="Goodstadt L."/>
            <person name="Hillier L.W."/>
            <person name="Zody M.C."/>
            <person name="Goldstein S."/>
            <person name="She X."/>
            <person name="Bult C.J."/>
            <person name="Agarwala R."/>
            <person name="Cherry J.L."/>
            <person name="DiCuccio M."/>
            <person name="Hlavina W."/>
            <person name="Kapustin Y."/>
            <person name="Meric P."/>
            <person name="Maglott D."/>
            <person name="Birtle Z."/>
            <person name="Marques A.C."/>
            <person name="Graves T."/>
            <person name="Zhou S."/>
            <person name="Teague B."/>
            <person name="Potamousis K."/>
            <person name="Churas C."/>
            <person name="Place M."/>
            <person name="Herschleb J."/>
            <person name="Runnheim R."/>
            <person name="Forrest D."/>
            <person name="Amos-Landgraf J."/>
            <person name="Schwartz D.C."/>
            <person name="Cheng Z."/>
            <person name="Lindblad-Toh K."/>
            <person name="Eichler E.E."/>
            <person name="Ponting C.P."/>
        </authorList>
    </citation>
    <scope>NUCLEOTIDE SEQUENCE [LARGE SCALE GENOMIC DNA]</scope>
    <source>
        <strain>C57BL/6J</strain>
    </source>
</reference>
<reference key="3">
    <citation type="journal article" date="2005" name="Science">
        <title>The transcriptional landscape of the mammalian genome.</title>
        <authorList>
            <person name="Carninci P."/>
            <person name="Kasukawa T."/>
            <person name="Katayama S."/>
            <person name="Gough J."/>
            <person name="Frith M.C."/>
            <person name="Maeda N."/>
            <person name="Oyama R."/>
            <person name="Ravasi T."/>
            <person name="Lenhard B."/>
            <person name="Wells C."/>
            <person name="Kodzius R."/>
            <person name="Shimokawa K."/>
            <person name="Bajic V.B."/>
            <person name="Brenner S.E."/>
            <person name="Batalov S."/>
            <person name="Forrest A.R."/>
            <person name="Zavolan M."/>
            <person name="Davis M.J."/>
            <person name="Wilming L.G."/>
            <person name="Aidinis V."/>
            <person name="Allen J.E."/>
            <person name="Ambesi-Impiombato A."/>
            <person name="Apweiler R."/>
            <person name="Aturaliya R.N."/>
            <person name="Bailey T.L."/>
            <person name="Bansal M."/>
            <person name="Baxter L."/>
            <person name="Beisel K.W."/>
            <person name="Bersano T."/>
            <person name="Bono H."/>
            <person name="Chalk A.M."/>
            <person name="Chiu K.P."/>
            <person name="Choudhary V."/>
            <person name="Christoffels A."/>
            <person name="Clutterbuck D.R."/>
            <person name="Crowe M.L."/>
            <person name="Dalla E."/>
            <person name="Dalrymple B.P."/>
            <person name="de Bono B."/>
            <person name="Della Gatta G."/>
            <person name="di Bernardo D."/>
            <person name="Down T."/>
            <person name="Engstrom P."/>
            <person name="Fagiolini M."/>
            <person name="Faulkner G."/>
            <person name="Fletcher C.F."/>
            <person name="Fukushima T."/>
            <person name="Furuno M."/>
            <person name="Futaki S."/>
            <person name="Gariboldi M."/>
            <person name="Georgii-Hemming P."/>
            <person name="Gingeras T.R."/>
            <person name="Gojobori T."/>
            <person name="Green R.E."/>
            <person name="Gustincich S."/>
            <person name="Harbers M."/>
            <person name="Hayashi Y."/>
            <person name="Hensch T.K."/>
            <person name="Hirokawa N."/>
            <person name="Hill D."/>
            <person name="Huminiecki L."/>
            <person name="Iacono M."/>
            <person name="Ikeo K."/>
            <person name="Iwama A."/>
            <person name="Ishikawa T."/>
            <person name="Jakt M."/>
            <person name="Kanapin A."/>
            <person name="Katoh M."/>
            <person name="Kawasawa Y."/>
            <person name="Kelso J."/>
            <person name="Kitamura H."/>
            <person name="Kitano H."/>
            <person name="Kollias G."/>
            <person name="Krishnan S.P."/>
            <person name="Kruger A."/>
            <person name="Kummerfeld S.K."/>
            <person name="Kurochkin I.V."/>
            <person name="Lareau L.F."/>
            <person name="Lazarevic D."/>
            <person name="Lipovich L."/>
            <person name="Liu J."/>
            <person name="Liuni S."/>
            <person name="McWilliam S."/>
            <person name="Madan Babu M."/>
            <person name="Madera M."/>
            <person name="Marchionni L."/>
            <person name="Matsuda H."/>
            <person name="Matsuzawa S."/>
            <person name="Miki H."/>
            <person name="Mignone F."/>
            <person name="Miyake S."/>
            <person name="Morris K."/>
            <person name="Mottagui-Tabar S."/>
            <person name="Mulder N."/>
            <person name="Nakano N."/>
            <person name="Nakauchi H."/>
            <person name="Ng P."/>
            <person name="Nilsson R."/>
            <person name="Nishiguchi S."/>
            <person name="Nishikawa S."/>
            <person name="Nori F."/>
            <person name="Ohara O."/>
            <person name="Okazaki Y."/>
            <person name="Orlando V."/>
            <person name="Pang K.C."/>
            <person name="Pavan W.J."/>
            <person name="Pavesi G."/>
            <person name="Pesole G."/>
            <person name="Petrovsky N."/>
            <person name="Piazza S."/>
            <person name="Reed J."/>
            <person name="Reid J.F."/>
            <person name="Ring B.Z."/>
            <person name="Ringwald M."/>
            <person name="Rost B."/>
            <person name="Ruan Y."/>
            <person name="Salzberg S.L."/>
            <person name="Sandelin A."/>
            <person name="Schneider C."/>
            <person name="Schoenbach C."/>
            <person name="Sekiguchi K."/>
            <person name="Semple C.A."/>
            <person name="Seno S."/>
            <person name="Sessa L."/>
            <person name="Sheng Y."/>
            <person name="Shibata Y."/>
            <person name="Shimada H."/>
            <person name="Shimada K."/>
            <person name="Silva D."/>
            <person name="Sinclair B."/>
            <person name="Sperling S."/>
            <person name="Stupka E."/>
            <person name="Sugiura K."/>
            <person name="Sultana R."/>
            <person name="Takenaka Y."/>
            <person name="Taki K."/>
            <person name="Tammoja K."/>
            <person name="Tan S.L."/>
            <person name="Tang S."/>
            <person name="Taylor M.S."/>
            <person name="Tegner J."/>
            <person name="Teichmann S.A."/>
            <person name="Ueda H.R."/>
            <person name="van Nimwegen E."/>
            <person name="Verardo R."/>
            <person name="Wei C.L."/>
            <person name="Yagi K."/>
            <person name="Yamanishi H."/>
            <person name="Zabarovsky E."/>
            <person name="Zhu S."/>
            <person name="Zimmer A."/>
            <person name="Hide W."/>
            <person name="Bult C."/>
            <person name="Grimmond S.M."/>
            <person name="Teasdale R.D."/>
            <person name="Liu E.T."/>
            <person name="Brusic V."/>
            <person name="Quackenbush J."/>
            <person name="Wahlestedt C."/>
            <person name="Mattick J.S."/>
            <person name="Hume D.A."/>
            <person name="Kai C."/>
            <person name="Sasaki D."/>
            <person name="Tomaru Y."/>
            <person name="Fukuda S."/>
            <person name="Kanamori-Katayama M."/>
            <person name="Suzuki M."/>
            <person name="Aoki J."/>
            <person name="Arakawa T."/>
            <person name="Iida J."/>
            <person name="Imamura K."/>
            <person name="Itoh M."/>
            <person name="Kato T."/>
            <person name="Kawaji H."/>
            <person name="Kawagashira N."/>
            <person name="Kawashima T."/>
            <person name="Kojima M."/>
            <person name="Kondo S."/>
            <person name="Konno H."/>
            <person name="Nakano K."/>
            <person name="Ninomiya N."/>
            <person name="Nishio T."/>
            <person name="Okada M."/>
            <person name="Plessy C."/>
            <person name="Shibata K."/>
            <person name="Shiraki T."/>
            <person name="Suzuki S."/>
            <person name="Tagami M."/>
            <person name="Waki K."/>
            <person name="Watahiki A."/>
            <person name="Okamura-Oho Y."/>
            <person name="Suzuki H."/>
            <person name="Kawai J."/>
            <person name="Hayashizaki Y."/>
        </authorList>
    </citation>
    <scope>NUCLEOTIDE SEQUENCE [LARGE SCALE MRNA] OF 308-1376 (ISOFORMS 2 AND 3)</scope>
    <source>
        <strain>C57BL/6J</strain>
        <tissue>Skin</tissue>
        <tissue>Spinal ganglion</tissue>
    </source>
</reference>
<reference key="4">
    <citation type="journal article" date="2004" name="Genome Res.">
        <title>The status, quality, and expansion of the NIH full-length cDNA project: the Mammalian Gene Collection (MGC).</title>
        <authorList>
            <consortium name="The MGC Project Team"/>
        </authorList>
    </citation>
    <scope>NUCLEOTIDE SEQUENCE [LARGE SCALE MRNA] OF 721-1402 (ISOFORM 2)</scope>
    <scope>NUCLEOTIDE SEQUENCE [LARGE SCALE MRNA] OF 1160-1402 (ISOFORM 1)</scope>
    <source>
        <tissue>Colon</tissue>
        <tissue>Mammary tumor</tissue>
    </source>
</reference>
<reference key="5">
    <citation type="journal article" date="2000" name="Nat. Cell Biol.">
        <title>ERBIN: a basolateral PDZ protein that interacts with the mammalian ERBB2/HER2 receptor.</title>
        <authorList>
            <person name="Borg J.-P."/>
            <person name="Marchetto S."/>
            <person name="Le Bivic A."/>
            <person name="Ollendorff V."/>
            <person name="Jaulin-Bastard F."/>
            <person name="Saito H."/>
            <person name="Fournier E."/>
            <person name="Adelaide J."/>
            <person name="Margolis B."/>
            <person name="Birnbaum D."/>
        </authorList>
    </citation>
    <scope>NUCLEOTIDE SEQUENCE [MRNA] OF 908-1402 (ISOFORM 3)</scope>
</reference>
<reference key="6">
    <citation type="journal article" date="2005" name="J. Biol. Chem.">
        <title>A role for Erbin in the regulation of Nod2-dependent NF-kappaB signaling.</title>
        <authorList>
            <person name="McDonald C."/>
            <person name="Chen F.F."/>
            <person name="Ollendorff V."/>
            <person name="Ogura Y."/>
            <person name="Marchetto S."/>
            <person name="Lecine P."/>
            <person name="Borg J.P."/>
            <person name="Nunez G."/>
        </authorList>
    </citation>
    <scope>FUNCTION</scope>
    <scope>INTERACTION WITH NOD2</scope>
    <scope>SUBCELLULAR LOCATION</scope>
    <scope>MUTAGENESIS OF PRO-315</scope>
</reference>
<reference key="7">
    <citation type="journal article" date="2007" name="J. Immunol.">
        <title>Quantitative time-resolved phosphoproteomic analysis of mast cell signaling.</title>
        <authorList>
            <person name="Cao L."/>
            <person name="Yu K."/>
            <person name="Banh C."/>
            <person name="Nguyen V."/>
            <person name="Ritz A."/>
            <person name="Raphael B.J."/>
            <person name="Kawakami Y."/>
            <person name="Kawakami T."/>
            <person name="Salomon A.R."/>
        </authorList>
    </citation>
    <scope>PHOSPHORYLATION [LARGE SCALE ANALYSIS] AT TYR-1097</scope>
    <scope>IDENTIFICATION BY MASS SPECTROMETRY [LARGE SCALE ANALYSIS]</scope>
    <source>
        <tissue>Mast cell</tissue>
    </source>
</reference>
<reference key="8">
    <citation type="journal article" date="2007" name="Proc. Natl. Acad. Sci. U.S.A.">
        <title>Large-scale phosphorylation analysis of mouse liver.</title>
        <authorList>
            <person name="Villen J."/>
            <person name="Beausoleil S.A."/>
            <person name="Gerber S.A."/>
            <person name="Gygi S.P."/>
        </authorList>
    </citation>
    <scope>PHOSPHORYLATION [LARGE SCALE ANALYSIS] AT SER-599 AND SER-600</scope>
    <scope>IDENTIFICATION BY MASS SPECTROMETRY [LARGE SCALE ANALYSIS]</scope>
    <source>
        <tissue>Liver</tissue>
    </source>
</reference>
<reference key="9">
    <citation type="journal article" date="2008" name="Circ. Res.">
        <title>Nuclear alpha1-adrenergic receptors signal activated ERK localization to caveolae in adult cardiac myocytes.</title>
        <authorList>
            <person name="Wright C.D."/>
            <person name="Chen Q."/>
            <person name="Baye N.L."/>
            <person name="Huang Y."/>
            <person name="Healy C.L."/>
            <person name="Kasinathan S."/>
            <person name="O'Connell T.D."/>
        </authorList>
    </citation>
    <scope>SUBCELLULAR LOCATION</scope>
</reference>
<reference key="10">
    <citation type="journal article" date="2009" name="Immunity">
        <title>The phagosomal proteome in interferon-gamma-activated macrophages.</title>
        <authorList>
            <person name="Trost M."/>
            <person name="English L."/>
            <person name="Lemieux S."/>
            <person name="Courcelles M."/>
            <person name="Desjardins M."/>
            <person name="Thibault P."/>
        </authorList>
    </citation>
    <scope>PHOSPHORYLATION [LARGE SCALE ANALYSIS] AT SER-599; SER-600; SER-712 AND SER-854</scope>
    <scope>IDENTIFICATION BY MASS SPECTROMETRY [LARGE SCALE ANALYSIS]</scope>
</reference>
<reference key="11">
    <citation type="journal article" date="2009" name="Mol. Cell. Proteomics">
        <title>Large scale localization of protein phosphorylation by use of electron capture dissociation mass spectrometry.</title>
        <authorList>
            <person name="Sweet S.M."/>
            <person name="Bailey C.M."/>
            <person name="Cunningham D.L."/>
            <person name="Heath J.K."/>
            <person name="Cooper H.J."/>
        </authorList>
    </citation>
    <scope>IDENTIFICATION BY MASS SPECTROMETRY [LARGE SCALE ANALYSIS]</scope>
    <source>
        <tissue>Embryonic fibroblast</tissue>
    </source>
</reference>
<reference key="12">
    <citation type="journal article" date="2010" name="Cell">
        <title>A tissue-specific atlas of mouse protein phosphorylation and expression.</title>
        <authorList>
            <person name="Huttlin E.L."/>
            <person name="Jedrychowski M.P."/>
            <person name="Elias J.E."/>
            <person name="Goswami T."/>
            <person name="Rad R."/>
            <person name="Beausoleil S.A."/>
            <person name="Villen J."/>
            <person name="Haas W."/>
            <person name="Sowa M.E."/>
            <person name="Gygi S.P."/>
        </authorList>
    </citation>
    <scope>PHOSPHORYLATION [LARGE SCALE ANALYSIS] AT SER-440; SER-444; TYR-483; SER-595; SER-599; SER-600; SER-712; SER-849; SER-869 AND SER-1150</scope>
    <scope>PHOSPHORYLATION [LARGE SCALE ANALYSIS] AT SER-1231 AND SER-1234 (ISOFORM 2)</scope>
    <scope>IDENTIFICATION BY MASS SPECTROMETRY [LARGE SCALE ANALYSIS]</scope>
    <source>
        <tissue>Brain</tissue>
        <tissue>Brown adipose tissue</tissue>
        <tissue>Heart</tissue>
        <tissue>Kidney</tissue>
        <tissue>Liver</tissue>
        <tissue>Lung</tissue>
        <tissue>Pancreas</tissue>
        <tissue>Spleen</tissue>
    </source>
</reference>
<dbReference type="EMBL" id="AK122473">
    <property type="protein sequence ID" value="BAC65755.1"/>
    <property type="status" value="ALT_INIT"/>
    <property type="molecule type" value="mRNA"/>
</dbReference>
<dbReference type="EMBL" id="AC154310">
    <property type="status" value="NOT_ANNOTATED_CDS"/>
    <property type="molecule type" value="Genomic_DNA"/>
</dbReference>
<dbReference type="EMBL" id="CT009728">
    <property type="status" value="NOT_ANNOTATED_CDS"/>
    <property type="molecule type" value="Genomic_DNA"/>
</dbReference>
<dbReference type="EMBL" id="AK029054">
    <property type="protein sequence ID" value="BAC26267.1"/>
    <property type="molecule type" value="mRNA"/>
</dbReference>
<dbReference type="EMBL" id="AK051733">
    <property type="protein sequence ID" value="BAC34742.1"/>
    <property type="molecule type" value="mRNA"/>
</dbReference>
<dbReference type="EMBL" id="BC005691">
    <property type="protein sequence ID" value="AAH05691.3"/>
    <property type="molecule type" value="mRNA"/>
</dbReference>
<dbReference type="EMBL" id="BC028256">
    <property type="protein sequence ID" value="AAH28256.1"/>
    <property type="molecule type" value="mRNA"/>
</dbReference>
<dbReference type="EMBL" id="AF263743">
    <property type="protein sequence ID" value="AAF77047.1"/>
    <property type="molecule type" value="mRNA"/>
</dbReference>
<dbReference type="CCDS" id="CCDS26744.1">
    <molecule id="Q80TH2-2"/>
</dbReference>
<dbReference type="CCDS" id="CCDS79233.1">
    <molecule id="Q80TH2-3"/>
</dbReference>
<dbReference type="RefSeq" id="NP_001005868.1">
    <molecule id="Q80TH2-2"/>
    <property type="nucleotide sequence ID" value="NM_001005868.2"/>
</dbReference>
<dbReference type="RefSeq" id="NP_001276402.1">
    <molecule id="Q80TH2-3"/>
    <property type="nucleotide sequence ID" value="NM_001289473.1"/>
</dbReference>
<dbReference type="RefSeq" id="NP_001276403.1">
    <property type="nucleotide sequence ID" value="NM_001289474.1"/>
</dbReference>
<dbReference type="RefSeq" id="NP_001276404.1">
    <property type="nucleotide sequence ID" value="NM_001289475.1"/>
</dbReference>
<dbReference type="BMRB" id="Q80TH2"/>
<dbReference type="SMR" id="Q80TH2"/>
<dbReference type="BioGRID" id="208523">
    <property type="interactions" value="26"/>
</dbReference>
<dbReference type="FunCoup" id="Q80TH2">
    <property type="interactions" value="2061"/>
</dbReference>
<dbReference type="IntAct" id="Q80TH2">
    <property type="interactions" value="5"/>
</dbReference>
<dbReference type="MINT" id="Q80TH2"/>
<dbReference type="STRING" id="10090.ENSMUSP00000140536"/>
<dbReference type="GlyGen" id="Q80TH2">
    <property type="glycosylation" value="6 sites, 3 N-linked glycans (3 sites), 1 O-linked glycan (2 sites)"/>
</dbReference>
<dbReference type="iPTMnet" id="Q80TH2"/>
<dbReference type="PhosphoSitePlus" id="Q80TH2"/>
<dbReference type="SwissPalm" id="Q80TH2"/>
<dbReference type="jPOST" id="Q80TH2"/>
<dbReference type="PaxDb" id="10090-ENSMUSP00000140536"/>
<dbReference type="ProteomicsDB" id="275465">
    <molecule id="Q80TH2-3"/>
</dbReference>
<dbReference type="ProteomicsDB" id="275466">
    <molecule id="Q80TH2-1"/>
</dbReference>
<dbReference type="ProteomicsDB" id="275467">
    <molecule id="Q80TH2-2"/>
</dbReference>
<dbReference type="Pumba" id="Q80TH2"/>
<dbReference type="Antibodypedia" id="23812">
    <property type="antibodies" value="194 antibodies from 32 providers"/>
</dbReference>
<dbReference type="DNASU" id="59079"/>
<dbReference type="Ensembl" id="ENSMUST00000022222.12">
    <molecule id="Q80TH2-1"/>
    <property type="protein sequence ID" value="ENSMUSP00000022222.6"/>
    <property type="gene ID" value="ENSMUSG00000021709.15"/>
</dbReference>
<dbReference type="Ensembl" id="ENSMUST00000053927.12">
    <molecule id="Q80TH2-1"/>
    <property type="protein sequence ID" value="ENSMUSP00000057956.7"/>
    <property type="gene ID" value="ENSMUSG00000021709.15"/>
</dbReference>
<dbReference type="Ensembl" id="ENSMUST00000091269.11">
    <molecule id="Q80TH2-3"/>
    <property type="protein sequence ID" value="ENSMUSP00000088813.5"/>
    <property type="gene ID" value="ENSMUSG00000021709.15"/>
</dbReference>
<dbReference type="Ensembl" id="ENSMUST00000191275.7">
    <molecule id="Q80TH2-2"/>
    <property type="protein sequence ID" value="ENSMUSP00000140536.2"/>
    <property type="gene ID" value="ENSMUSG00000021709.15"/>
</dbReference>
<dbReference type="GeneID" id="59079"/>
<dbReference type="KEGG" id="mmu:59079"/>
<dbReference type="UCSC" id="uc007rsk.3">
    <molecule id="Q80TH2-3"/>
    <property type="organism name" value="mouse"/>
</dbReference>
<dbReference type="UCSC" id="uc056yux.1">
    <molecule id="Q80TH2-1"/>
    <property type="organism name" value="mouse"/>
</dbReference>
<dbReference type="AGR" id="MGI:1890169"/>
<dbReference type="CTD" id="55914"/>
<dbReference type="MGI" id="MGI:1890169">
    <property type="gene designation" value="Erbin"/>
</dbReference>
<dbReference type="VEuPathDB" id="HostDB:ENSMUSG00000021709"/>
<dbReference type="eggNOG" id="KOG0619">
    <property type="taxonomic scope" value="Eukaryota"/>
</dbReference>
<dbReference type="GeneTree" id="ENSGT00940000159526"/>
<dbReference type="InParanoid" id="Q80TH2"/>
<dbReference type="OMA" id="PIANHED"/>
<dbReference type="OrthoDB" id="2187496at2759"/>
<dbReference type="TreeFam" id="TF351429"/>
<dbReference type="Reactome" id="R-MMU-1227986">
    <property type="pathway name" value="Signaling by ERBB2"/>
</dbReference>
<dbReference type="Reactome" id="R-MMU-8863795">
    <property type="pathway name" value="Downregulation of ERBB2 signaling"/>
</dbReference>
<dbReference type="Reactome" id="R-MMU-8980692">
    <property type="pathway name" value="RHOA GTPase cycle"/>
</dbReference>
<dbReference type="Reactome" id="R-MMU-9013026">
    <property type="pathway name" value="RHOB GTPase cycle"/>
</dbReference>
<dbReference type="Reactome" id="R-MMU-9013106">
    <property type="pathway name" value="RHOC GTPase cycle"/>
</dbReference>
<dbReference type="Reactome" id="R-MMU-9013149">
    <property type="pathway name" value="RAC1 GTPase cycle"/>
</dbReference>
<dbReference type="Reactome" id="R-MMU-9013404">
    <property type="pathway name" value="RAC2 GTPase cycle"/>
</dbReference>
<dbReference type="Reactome" id="R-MMU-9013408">
    <property type="pathway name" value="RHOG GTPase cycle"/>
</dbReference>
<dbReference type="Reactome" id="R-MMU-9013423">
    <property type="pathway name" value="RAC3 GTPase cycle"/>
</dbReference>
<dbReference type="Reactome" id="R-MMU-9652282">
    <property type="pathway name" value="Drug-mediated inhibition of ERBB2 signaling"/>
</dbReference>
<dbReference type="BioGRID-ORCS" id="59079">
    <property type="hits" value="3 hits in 76 CRISPR screens"/>
</dbReference>
<dbReference type="CD-CODE" id="CE726F99">
    <property type="entry name" value="Postsynaptic density"/>
</dbReference>
<dbReference type="ChiTaRS" id="Erbin">
    <property type="organism name" value="mouse"/>
</dbReference>
<dbReference type="PRO" id="PR:Q80TH2"/>
<dbReference type="Proteomes" id="UP000000589">
    <property type="component" value="Chromosome 13"/>
</dbReference>
<dbReference type="RNAct" id="Q80TH2">
    <property type="molecule type" value="protein"/>
</dbReference>
<dbReference type="Bgee" id="ENSMUSG00000021709">
    <property type="expression patterns" value="Expressed in parotid gland and 258 other cell types or tissues"/>
</dbReference>
<dbReference type="ExpressionAtlas" id="Q80TH2">
    <property type="expression patterns" value="baseline and differential"/>
</dbReference>
<dbReference type="GO" id="GO:0016323">
    <property type="term" value="C:basolateral plasma membrane"/>
    <property type="evidence" value="ECO:0000314"/>
    <property type="project" value="MGI"/>
</dbReference>
<dbReference type="GO" id="GO:0005737">
    <property type="term" value="C:cytoplasm"/>
    <property type="evidence" value="ECO:0007669"/>
    <property type="project" value="Ensembl"/>
</dbReference>
<dbReference type="GO" id="GO:0098978">
    <property type="term" value="C:glutamatergic synapse"/>
    <property type="evidence" value="ECO:0000314"/>
    <property type="project" value="SynGO"/>
</dbReference>
<dbReference type="GO" id="GO:0030056">
    <property type="term" value="C:hemidesmosome"/>
    <property type="evidence" value="ECO:0007669"/>
    <property type="project" value="UniProtKB-SubCell"/>
</dbReference>
<dbReference type="GO" id="GO:0031594">
    <property type="term" value="C:neuromuscular junction"/>
    <property type="evidence" value="ECO:0007669"/>
    <property type="project" value="Ensembl"/>
</dbReference>
<dbReference type="GO" id="GO:0031965">
    <property type="term" value="C:nuclear membrane"/>
    <property type="evidence" value="ECO:0007669"/>
    <property type="project" value="UniProtKB-SubCell"/>
</dbReference>
<dbReference type="GO" id="GO:0016607">
    <property type="term" value="C:nuclear speck"/>
    <property type="evidence" value="ECO:0007669"/>
    <property type="project" value="Ensembl"/>
</dbReference>
<dbReference type="GO" id="GO:0098794">
    <property type="term" value="C:postsynapse"/>
    <property type="evidence" value="ECO:0000314"/>
    <property type="project" value="SynGO"/>
</dbReference>
<dbReference type="GO" id="GO:0099572">
    <property type="term" value="C:postsynaptic specialization"/>
    <property type="evidence" value="ECO:0007669"/>
    <property type="project" value="Ensembl"/>
</dbReference>
<dbReference type="GO" id="GO:0005102">
    <property type="term" value="F:signaling receptor binding"/>
    <property type="evidence" value="ECO:0007669"/>
    <property type="project" value="Ensembl"/>
</dbReference>
<dbReference type="GO" id="GO:0071356">
    <property type="term" value="P:cellular response to tumor necrosis factor"/>
    <property type="evidence" value="ECO:0007669"/>
    <property type="project" value="Ensembl"/>
</dbReference>
<dbReference type="GO" id="GO:0071638">
    <property type="term" value="P:negative regulation of monocyte chemotactic protein-1 production"/>
    <property type="evidence" value="ECO:0000315"/>
    <property type="project" value="UniProtKB"/>
</dbReference>
<dbReference type="GO" id="GO:0070433">
    <property type="term" value="P:negative regulation of nucleotide-binding oligomerization domain containing 2 signaling pathway"/>
    <property type="evidence" value="ECO:0000315"/>
    <property type="project" value="UniProtKB"/>
</dbReference>
<dbReference type="GO" id="GO:0006605">
    <property type="term" value="P:protein targeting"/>
    <property type="evidence" value="ECO:0000314"/>
    <property type="project" value="MGI"/>
</dbReference>
<dbReference type="GO" id="GO:0099072">
    <property type="term" value="P:regulation of postsynaptic membrane neurotransmitter receptor levels"/>
    <property type="evidence" value="ECO:0000314"/>
    <property type="project" value="SynGO"/>
</dbReference>
<dbReference type="GO" id="GO:0032496">
    <property type="term" value="P:response to lipopolysaccharide"/>
    <property type="evidence" value="ECO:0007669"/>
    <property type="project" value="Ensembl"/>
</dbReference>
<dbReference type="GO" id="GO:0032495">
    <property type="term" value="P:response to muramyl dipeptide"/>
    <property type="evidence" value="ECO:0007669"/>
    <property type="project" value="Ensembl"/>
</dbReference>
<dbReference type="CDD" id="cd06749">
    <property type="entry name" value="PDZ_densin_erbin-like"/>
    <property type="match status" value="1"/>
</dbReference>
<dbReference type="FunFam" id="2.30.42.10:FF:000036">
    <property type="entry name" value="Erbin isoform 7"/>
    <property type="match status" value="1"/>
</dbReference>
<dbReference type="FunFam" id="3.80.10.10:FF:000013">
    <property type="entry name" value="Erbin isoform 7"/>
    <property type="match status" value="1"/>
</dbReference>
<dbReference type="FunFam" id="3.80.10.10:FF:000020">
    <property type="entry name" value="Erbin isoform 7"/>
    <property type="match status" value="1"/>
</dbReference>
<dbReference type="FunFam" id="3.80.10.10:FF:000022">
    <property type="entry name" value="Erbin isoform 7"/>
    <property type="match status" value="1"/>
</dbReference>
<dbReference type="Gene3D" id="2.30.42.10">
    <property type="match status" value="1"/>
</dbReference>
<dbReference type="Gene3D" id="3.80.10.10">
    <property type="entry name" value="Ribonuclease Inhibitor"/>
    <property type="match status" value="3"/>
</dbReference>
<dbReference type="InterPro" id="IPR001611">
    <property type="entry name" value="Leu-rich_rpt"/>
</dbReference>
<dbReference type="InterPro" id="IPR003591">
    <property type="entry name" value="Leu-rich_rpt_typical-subtyp"/>
</dbReference>
<dbReference type="InterPro" id="IPR032675">
    <property type="entry name" value="LRR_dom_sf"/>
</dbReference>
<dbReference type="InterPro" id="IPR055414">
    <property type="entry name" value="LRR_R13L4/SHOC2-like"/>
</dbReference>
<dbReference type="InterPro" id="IPR001478">
    <property type="entry name" value="PDZ"/>
</dbReference>
<dbReference type="InterPro" id="IPR036034">
    <property type="entry name" value="PDZ_sf"/>
</dbReference>
<dbReference type="InterPro" id="IPR050614">
    <property type="entry name" value="Synaptic_Scaffolding_LAP-MAGUK"/>
</dbReference>
<dbReference type="PANTHER" id="PTHR23119">
    <property type="entry name" value="DISCS LARGE"/>
    <property type="match status" value="1"/>
</dbReference>
<dbReference type="PANTHER" id="PTHR23119:SF46">
    <property type="entry name" value="ERBB2 INTERACTING PROTEIN"/>
    <property type="match status" value="1"/>
</dbReference>
<dbReference type="Pfam" id="PF23598">
    <property type="entry name" value="LRR_14"/>
    <property type="match status" value="1"/>
</dbReference>
<dbReference type="Pfam" id="PF13855">
    <property type="entry name" value="LRR_8"/>
    <property type="match status" value="3"/>
</dbReference>
<dbReference type="Pfam" id="PF00595">
    <property type="entry name" value="PDZ"/>
    <property type="match status" value="1"/>
</dbReference>
<dbReference type="SMART" id="SM00364">
    <property type="entry name" value="LRR_BAC"/>
    <property type="match status" value="9"/>
</dbReference>
<dbReference type="SMART" id="SM00365">
    <property type="entry name" value="LRR_SD22"/>
    <property type="match status" value="8"/>
</dbReference>
<dbReference type="SMART" id="SM00369">
    <property type="entry name" value="LRR_TYP"/>
    <property type="match status" value="12"/>
</dbReference>
<dbReference type="SMART" id="SM00228">
    <property type="entry name" value="PDZ"/>
    <property type="match status" value="1"/>
</dbReference>
<dbReference type="SUPFAM" id="SSF52058">
    <property type="entry name" value="L domain-like"/>
    <property type="match status" value="2"/>
</dbReference>
<dbReference type="SUPFAM" id="SSF50156">
    <property type="entry name" value="PDZ domain-like"/>
    <property type="match status" value="1"/>
</dbReference>
<dbReference type="PROSITE" id="PS51450">
    <property type="entry name" value="LRR"/>
    <property type="match status" value="13"/>
</dbReference>
<dbReference type="PROSITE" id="PS50106">
    <property type="entry name" value="PDZ"/>
    <property type="match status" value="1"/>
</dbReference>
<accession>Q80TH2</accession>
<accession>E9QND6</accession>
<accession>Q8BQ14</accession>
<accession>Q8CE41</accession>
<accession>Q8K171</accession>
<accession>Q99JU3</accession>
<accession>Q9JI47</accession>
<organism>
    <name type="scientific">Mus musculus</name>
    <name type="common">Mouse</name>
    <dbReference type="NCBI Taxonomy" id="10090"/>
    <lineage>
        <taxon>Eukaryota</taxon>
        <taxon>Metazoa</taxon>
        <taxon>Chordata</taxon>
        <taxon>Craniata</taxon>
        <taxon>Vertebrata</taxon>
        <taxon>Euteleostomi</taxon>
        <taxon>Mammalia</taxon>
        <taxon>Eutheria</taxon>
        <taxon>Euarchontoglires</taxon>
        <taxon>Glires</taxon>
        <taxon>Rodentia</taxon>
        <taxon>Myomorpha</taxon>
        <taxon>Muroidea</taxon>
        <taxon>Muridae</taxon>
        <taxon>Murinae</taxon>
        <taxon>Mus</taxon>
        <taxon>Mus</taxon>
    </lineage>
</organism>
<sequence>MTTKRSLFVRLVPCRCLRGEEETVTTLDYSHCSLEQVPKEIFTFEKTLEELYLDANQIEELPKQLFNCQSLHKLSLPDNDLTTLPASIANLINLRELDVSKNGIQEFPENIKNCKVLTIVEASVNPISKLPDGFSQLLNLTQLYLNDAFLEFLPANFGRLTKLQILELRENQLKMLPKTMNRLTQLERLDLGSNEFTEVPEVLEQLSGLREFWMDGNRLTFIPGFIGSLRQLTYLDVSKNNIEMVEEGISTCENLQDFLLSSNSLQQLPETIGSLKNVTTLKIDENQLMYLPDSIGGLRSIEELDCSFNEIEALPSSIGQLTNMRTFAADHNYLQQLPPEIGNWKNITVLFLHCNKLETLPEEMGDMQKLKVINLSDNRLKNLPFSFTKLQQLTAMWLSDNQSKPLIPLQKETDTETQKMVLTNYMFPQQPRTEDVMFISDNESFNPALWEEQRKQRAQVAFECDEDKDEREAPPREGNLKRYPTPYPDELKNMVKTVQTIVHRLKDEETNEESGRDLKQHEDQQVVNKDKCVKTSESTTTKSKLDEREKYMNSVQKMSEPEAETNGGNLPVTASMKLSGNLKHIVNHDDVFEESEELSSDEEMKMAEMRPPLIESSINQPKVVALSNNKKDDAKDADSLSDEVTHNSNQNNSNCSSPSRMSDSVSLNTDSSQDTSLCSPVKQTPVDSNSKVRQEDENFNSLLQNGVNLNNSPEEKFKINDKKDFKLPEYDLNIEEQLVLIEKDIDSKATSDDSRQLDHINMNINKLVTNNIFQPEVMERSKMQDIVLGTGFLSIHPKNEAEHIENGAKFPNLESINKVNGLCEDTAPSPGRVEPQKASSSADVGISKSTEDLSPQRSGPTGAVVKSHSITNMETGGLKIYDILGDDGPQPPSAAVKIASAVDGKNIVRSKSATLLYDQPLQVFTAASSSSELLSGTKAVFKFDSNHNPEEPDIIRAATVSGPQSTPHLYGPPQYNVQYSGSATVKDTLWHPKQNPQIDPVSFPPQRLPRSESAENHSYAKHSANMNFSNHNNVRANTGYHLQQRLAPARHGEMWAISPNDRLVPAVTRTTIQRQSSVSSTASVNLGDPTRRTEGDYLSYRELHSMGRTPVMSGSQRPLSARAYSIDGPNTSRPQSARPSINEIPERTMSVSDFNYSRTSPSKRPNTRVGSEHSLLDPPGKSKVPHDWREQVLRHIEAKKLEKHPQTSSPGECCQDDRFMSEEQNHPSGALSHRGLPDSLMKMPLSNGQMGQPLRPQAHYSQTHHPPQASVARHPSREQLIDYLMLKVAHQPPYTHPHCSPRQGHELAKQEIRVRVEKDPELGFSISGGVGGRGNPFRPDDDGIFVTRVQPEGPASKLLQPGDKIIQANGYSFINIEHGQAVSLLKTFHNAVDLIIVREVSS</sequence>
<evidence type="ECO:0000250" key="1">
    <source>
        <dbReference type="UniProtKB" id="Q96RT1"/>
    </source>
</evidence>
<evidence type="ECO:0000255" key="2">
    <source>
        <dbReference type="PROSITE-ProRule" id="PRU00143"/>
    </source>
</evidence>
<evidence type="ECO:0000256" key="3">
    <source>
        <dbReference type="SAM" id="MobiDB-lite"/>
    </source>
</evidence>
<evidence type="ECO:0000269" key="4">
    <source>
    </source>
</evidence>
<evidence type="ECO:0000269" key="5">
    <source>
    </source>
</evidence>
<evidence type="ECO:0000303" key="6">
    <source>
    </source>
</evidence>
<evidence type="ECO:0000303" key="7">
    <source>
    </source>
</evidence>
<evidence type="ECO:0000303" key="8">
    <source>
    </source>
</evidence>
<evidence type="ECO:0000303" key="9">
    <source>
    </source>
</evidence>
<evidence type="ECO:0000305" key="10"/>
<evidence type="ECO:0000312" key="11">
    <source>
        <dbReference type="EMBL" id="BAC65755.1"/>
    </source>
</evidence>
<evidence type="ECO:0000312" key="12">
    <source>
        <dbReference type="MGI" id="MGI:1890169"/>
    </source>
</evidence>
<evidence type="ECO:0007744" key="13">
    <source>
    </source>
</evidence>
<evidence type="ECO:0007744" key="14">
    <source>
    </source>
</evidence>
<evidence type="ECO:0007744" key="15">
    <source>
    </source>
</evidence>
<evidence type="ECO:0007744" key="16">
    <source>
    </source>
</evidence>
<name>ERBIN_MOUSE</name>
<keyword id="KW-0025">Alternative splicing</keyword>
<keyword id="KW-0965">Cell junction</keyword>
<keyword id="KW-1003">Cell membrane</keyword>
<keyword id="KW-0433">Leucine-rich repeat</keyword>
<keyword id="KW-0472">Membrane</keyword>
<keyword id="KW-0539">Nucleus</keyword>
<keyword id="KW-0597">Phosphoprotein</keyword>
<keyword id="KW-1185">Reference proteome</keyword>
<keyword id="KW-0677">Repeat</keyword>
<comment type="function">
    <text evidence="1 4">Acts as an adapter for the receptor ERBB2, in epithelia. By binding the unphosphorylated ERBB2 'Tyr-1248' receptor, it may contribute to stabilize this unphosphorylated state (By similarity). Inhibits NOD2-dependent NF-kappa-B signaling and pro-inflammatory cytokine secretion (PubMed:16203728).</text>
</comment>
<comment type="subunit">
    <text evidence="1 4">Interacts with ERBB2, BPAG1 and ITGB4. May favor the localization of ERBB2, by restricting its presence to the basolateral membrane of epithelial cells. Also found to interact with ARVCF and delta catenin. Interacts (via C-terminus) with DST (via N-terminus) (By similarity). Interacts with NOD2 (via CARD domain) (PubMed:16203728).</text>
</comment>
<comment type="subcellular location">
    <subcellularLocation>
        <location evidence="1">Cell junction</location>
        <location evidence="1">Hemidesmosome</location>
    </subcellularLocation>
    <subcellularLocation>
        <location evidence="5">Nucleus membrane</location>
    </subcellularLocation>
    <subcellularLocation>
        <location evidence="4">Basolateral cell membrane</location>
    </subcellularLocation>
    <text evidence="1">Found in hemidesmosomes, which are cell-substrate adhesion complexes in stratified epithelia. In transfected cells, either diffusely distributed over the cytoplasm or concentrated at the basolateral membrane (By similarity). Colocalizes with the adrenergic receptors, ADREN1A and ADREN1B, at the nuclear membrane of cardiac myocytes.</text>
</comment>
<comment type="alternative products">
    <event type="alternative splicing"/>
    <isoform>
        <id>Q80TH2-3</id>
        <name>3</name>
        <sequence type="displayed"/>
    </isoform>
    <isoform>
        <id>Q80TH2-1</id>
        <name>1</name>
        <sequence type="described" ref="VSP_010809"/>
    </isoform>
    <isoform>
        <id>Q80TH2-2</id>
        <name>2</name>
        <sequence type="described" ref="VSP_010808"/>
    </isoform>
</comment>
<comment type="PTM">
    <text>Isoform 2 is phosphorylated on Ser-1231 and Ser-1234.</text>
</comment>
<comment type="similarity">
    <text evidence="10">Belongs to the LAP (LRR and PDZ) protein family.</text>
</comment>
<comment type="sequence caution" evidence="10">
    <conflict type="erroneous initiation">
        <sequence resource="EMBL-CDS" id="BAC65755"/>
    </conflict>
    <text>Extended N-terminus.</text>
</comment>
<protein>
    <recommendedName>
        <fullName evidence="6">Erbin</fullName>
    </recommendedName>
    <alternativeName>
        <fullName>Densin-180-like protein</fullName>
    </alternativeName>
    <alternativeName>
        <fullName evidence="6">Erbb2-interacting protein</fullName>
    </alternativeName>
    <alternativeName>
        <fullName>Protein LAP2</fullName>
    </alternativeName>
</protein>